<accession>Q6FF91</accession>
<feature type="chain" id="PRO_0000243374" description="Large ribosomal subunit protein bL12">
    <location>
        <begin position="1"/>
        <end position="121"/>
    </location>
</feature>
<evidence type="ECO:0000255" key="1">
    <source>
        <dbReference type="HAMAP-Rule" id="MF_00368"/>
    </source>
</evidence>
<evidence type="ECO:0000305" key="2"/>
<reference key="1">
    <citation type="journal article" date="2004" name="Nucleic Acids Res.">
        <title>Unique features revealed by the genome sequence of Acinetobacter sp. ADP1, a versatile and naturally transformation competent bacterium.</title>
        <authorList>
            <person name="Barbe V."/>
            <person name="Vallenet D."/>
            <person name="Fonknechten N."/>
            <person name="Kreimeyer A."/>
            <person name="Oztas S."/>
            <person name="Labarre L."/>
            <person name="Cruveiller S."/>
            <person name="Robert C."/>
            <person name="Duprat S."/>
            <person name="Wincker P."/>
            <person name="Ornston L.N."/>
            <person name="Weissenbach J."/>
            <person name="Marliere P."/>
            <person name="Cohen G.N."/>
            <person name="Medigue C."/>
        </authorList>
    </citation>
    <scope>NUCLEOTIDE SEQUENCE [LARGE SCALE GENOMIC DNA]</scope>
    <source>
        <strain>ATCC 33305 / BD413 / ADP1</strain>
    </source>
</reference>
<name>RL7_ACIAD</name>
<sequence>MALTNEEILNAVAEKTVLELVELISAFEEKFNVSAAAVAVAAGPAAAAVEEQTEFNVELTSFGANKVAVIKAVREATGLGLKEAKDLVEGAPQVLKEGISKEEGEELKKKLEEAGATVTLK</sequence>
<protein>
    <recommendedName>
        <fullName evidence="1">Large ribosomal subunit protein bL12</fullName>
    </recommendedName>
    <alternativeName>
        <fullName evidence="2">50S ribosomal protein L7/L12</fullName>
    </alternativeName>
</protein>
<proteinExistence type="inferred from homology"/>
<keyword id="KW-0687">Ribonucleoprotein</keyword>
<keyword id="KW-0689">Ribosomal protein</keyword>
<organism>
    <name type="scientific">Acinetobacter baylyi (strain ATCC 33305 / BD413 / ADP1)</name>
    <dbReference type="NCBI Taxonomy" id="62977"/>
    <lineage>
        <taxon>Bacteria</taxon>
        <taxon>Pseudomonadati</taxon>
        <taxon>Pseudomonadota</taxon>
        <taxon>Gammaproteobacteria</taxon>
        <taxon>Moraxellales</taxon>
        <taxon>Moraxellaceae</taxon>
        <taxon>Acinetobacter</taxon>
    </lineage>
</organism>
<gene>
    <name evidence="1" type="primary">rplL</name>
    <name type="ordered locus">ACIAD0306</name>
</gene>
<dbReference type="EMBL" id="CR543861">
    <property type="protein sequence ID" value="CAG67266.1"/>
    <property type="molecule type" value="Genomic_DNA"/>
</dbReference>
<dbReference type="RefSeq" id="WP_011182018.1">
    <property type="nucleotide sequence ID" value="NC_005966.1"/>
</dbReference>
<dbReference type="SMR" id="Q6FF91"/>
<dbReference type="STRING" id="202950.GCA_001485005_00580"/>
<dbReference type="GeneID" id="45232820"/>
<dbReference type="KEGG" id="aci:ACIAD0306"/>
<dbReference type="eggNOG" id="COG0222">
    <property type="taxonomic scope" value="Bacteria"/>
</dbReference>
<dbReference type="HOGENOM" id="CLU_086499_3_2_6"/>
<dbReference type="OrthoDB" id="9811748at2"/>
<dbReference type="BioCyc" id="ASP62977:ACIAD_RS01455-MONOMER"/>
<dbReference type="Proteomes" id="UP000000430">
    <property type="component" value="Chromosome"/>
</dbReference>
<dbReference type="GO" id="GO:0022625">
    <property type="term" value="C:cytosolic large ribosomal subunit"/>
    <property type="evidence" value="ECO:0007669"/>
    <property type="project" value="TreeGrafter"/>
</dbReference>
<dbReference type="GO" id="GO:0003729">
    <property type="term" value="F:mRNA binding"/>
    <property type="evidence" value="ECO:0007669"/>
    <property type="project" value="TreeGrafter"/>
</dbReference>
<dbReference type="GO" id="GO:0003735">
    <property type="term" value="F:structural constituent of ribosome"/>
    <property type="evidence" value="ECO:0007669"/>
    <property type="project" value="InterPro"/>
</dbReference>
<dbReference type="GO" id="GO:0006412">
    <property type="term" value="P:translation"/>
    <property type="evidence" value="ECO:0007669"/>
    <property type="project" value="UniProtKB-UniRule"/>
</dbReference>
<dbReference type="CDD" id="cd00387">
    <property type="entry name" value="Ribosomal_L7_L12"/>
    <property type="match status" value="1"/>
</dbReference>
<dbReference type="FunFam" id="3.30.1390.10:FF:000001">
    <property type="entry name" value="50S ribosomal protein L7/L12"/>
    <property type="match status" value="1"/>
</dbReference>
<dbReference type="Gene3D" id="3.30.1390.10">
    <property type="match status" value="1"/>
</dbReference>
<dbReference type="Gene3D" id="1.20.5.710">
    <property type="entry name" value="Single helix bin"/>
    <property type="match status" value="1"/>
</dbReference>
<dbReference type="HAMAP" id="MF_00368">
    <property type="entry name" value="Ribosomal_bL12"/>
    <property type="match status" value="1"/>
</dbReference>
<dbReference type="InterPro" id="IPR000206">
    <property type="entry name" value="Ribosomal_bL12"/>
</dbReference>
<dbReference type="InterPro" id="IPR013823">
    <property type="entry name" value="Ribosomal_bL12_C"/>
</dbReference>
<dbReference type="InterPro" id="IPR014719">
    <property type="entry name" value="Ribosomal_bL12_C/ClpS-like"/>
</dbReference>
<dbReference type="InterPro" id="IPR008932">
    <property type="entry name" value="Ribosomal_bL12_oligo"/>
</dbReference>
<dbReference type="InterPro" id="IPR036235">
    <property type="entry name" value="Ribosomal_bL12_oligo_N_sf"/>
</dbReference>
<dbReference type="NCBIfam" id="TIGR00855">
    <property type="entry name" value="L12"/>
    <property type="match status" value="1"/>
</dbReference>
<dbReference type="PANTHER" id="PTHR45987">
    <property type="entry name" value="39S RIBOSOMAL PROTEIN L12"/>
    <property type="match status" value="1"/>
</dbReference>
<dbReference type="PANTHER" id="PTHR45987:SF4">
    <property type="entry name" value="LARGE RIBOSOMAL SUBUNIT PROTEIN BL12M"/>
    <property type="match status" value="1"/>
</dbReference>
<dbReference type="Pfam" id="PF00542">
    <property type="entry name" value="Ribosomal_L12"/>
    <property type="match status" value="1"/>
</dbReference>
<dbReference type="Pfam" id="PF16320">
    <property type="entry name" value="Ribosomal_L12_N"/>
    <property type="match status" value="1"/>
</dbReference>
<dbReference type="SUPFAM" id="SSF54736">
    <property type="entry name" value="ClpS-like"/>
    <property type="match status" value="1"/>
</dbReference>
<dbReference type="SUPFAM" id="SSF48300">
    <property type="entry name" value="Ribosomal protein L7/12, oligomerisation (N-terminal) domain"/>
    <property type="match status" value="1"/>
</dbReference>
<comment type="function">
    <text evidence="1">Forms part of the ribosomal stalk which helps the ribosome interact with GTP-bound translation factors. Is thus essential for accurate translation.</text>
</comment>
<comment type="subunit">
    <text evidence="1">Homodimer. Part of the ribosomal stalk of the 50S ribosomal subunit. Forms a multimeric L10(L12)X complex, where L10 forms an elongated spine to which 2 to 4 L12 dimers bind in a sequential fashion. Binds GTP-bound translation factors.</text>
</comment>
<comment type="similarity">
    <text evidence="1">Belongs to the bacterial ribosomal protein bL12 family.</text>
</comment>